<sequence>MLDIKKIKEILPHRYPFLLVDRVISVEEGKKVTAIKNVTANEEFFNGHFPEYPVMPGVLIVEALAQTSGIAMMQSEANKGKIGLFAGIDGCRFKRQVIPGDQLLLEAEITRMRGAIAKAKVKATVEGDLVCEAEIMFALSDLPK</sequence>
<accession>A0ALK8</accession>
<dbReference type="EC" id="4.2.1.59" evidence="1"/>
<dbReference type="EMBL" id="AM263198">
    <property type="protein sequence ID" value="CAK21890.1"/>
    <property type="molecule type" value="Genomic_DNA"/>
</dbReference>
<dbReference type="RefSeq" id="WP_011703204.1">
    <property type="nucleotide sequence ID" value="NC_008555.1"/>
</dbReference>
<dbReference type="SMR" id="A0ALK8"/>
<dbReference type="STRING" id="386043.lwe2472"/>
<dbReference type="GeneID" id="61190391"/>
<dbReference type="KEGG" id="lwe:lwe2472"/>
<dbReference type="eggNOG" id="COG0764">
    <property type="taxonomic scope" value="Bacteria"/>
</dbReference>
<dbReference type="HOGENOM" id="CLU_078912_3_0_9"/>
<dbReference type="OrthoDB" id="9772788at2"/>
<dbReference type="Proteomes" id="UP000000779">
    <property type="component" value="Chromosome"/>
</dbReference>
<dbReference type="GO" id="GO:0005737">
    <property type="term" value="C:cytoplasm"/>
    <property type="evidence" value="ECO:0007669"/>
    <property type="project" value="UniProtKB-SubCell"/>
</dbReference>
<dbReference type="GO" id="GO:0016020">
    <property type="term" value="C:membrane"/>
    <property type="evidence" value="ECO:0007669"/>
    <property type="project" value="GOC"/>
</dbReference>
<dbReference type="GO" id="GO:0019171">
    <property type="term" value="F:(3R)-hydroxyacyl-[acyl-carrier-protein] dehydratase activity"/>
    <property type="evidence" value="ECO:0007669"/>
    <property type="project" value="UniProtKB-EC"/>
</dbReference>
<dbReference type="GO" id="GO:0006633">
    <property type="term" value="P:fatty acid biosynthetic process"/>
    <property type="evidence" value="ECO:0007669"/>
    <property type="project" value="UniProtKB-UniRule"/>
</dbReference>
<dbReference type="GO" id="GO:0009245">
    <property type="term" value="P:lipid A biosynthetic process"/>
    <property type="evidence" value="ECO:0007669"/>
    <property type="project" value="UniProtKB-UniRule"/>
</dbReference>
<dbReference type="CDD" id="cd01288">
    <property type="entry name" value="FabZ"/>
    <property type="match status" value="1"/>
</dbReference>
<dbReference type="FunFam" id="3.10.129.10:FF:000001">
    <property type="entry name" value="3-hydroxyacyl-[acyl-carrier-protein] dehydratase FabZ"/>
    <property type="match status" value="1"/>
</dbReference>
<dbReference type="Gene3D" id="3.10.129.10">
    <property type="entry name" value="Hotdog Thioesterase"/>
    <property type="match status" value="1"/>
</dbReference>
<dbReference type="HAMAP" id="MF_00406">
    <property type="entry name" value="FabZ"/>
    <property type="match status" value="1"/>
</dbReference>
<dbReference type="InterPro" id="IPR013114">
    <property type="entry name" value="FabA_FabZ"/>
</dbReference>
<dbReference type="InterPro" id="IPR010084">
    <property type="entry name" value="FabZ"/>
</dbReference>
<dbReference type="InterPro" id="IPR029069">
    <property type="entry name" value="HotDog_dom_sf"/>
</dbReference>
<dbReference type="NCBIfam" id="TIGR01750">
    <property type="entry name" value="fabZ"/>
    <property type="match status" value="1"/>
</dbReference>
<dbReference type="NCBIfam" id="NF000582">
    <property type="entry name" value="PRK00006.1"/>
    <property type="match status" value="1"/>
</dbReference>
<dbReference type="PANTHER" id="PTHR30272">
    <property type="entry name" value="3-HYDROXYACYL-[ACYL-CARRIER-PROTEIN] DEHYDRATASE"/>
    <property type="match status" value="1"/>
</dbReference>
<dbReference type="PANTHER" id="PTHR30272:SF1">
    <property type="entry name" value="3-HYDROXYACYL-[ACYL-CARRIER-PROTEIN] DEHYDRATASE"/>
    <property type="match status" value="1"/>
</dbReference>
<dbReference type="Pfam" id="PF07977">
    <property type="entry name" value="FabA"/>
    <property type="match status" value="1"/>
</dbReference>
<dbReference type="SUPFAM" id="SSF54637">
    <property type="entry name" value="Thioesterase/thiol ester dehydrase-isomerase"/>
    <property type="match status" value="1"/>
</dbReference>
<evidence type="ECO:0000255" key="1">
    <source>
        <dbReference type="HAMAP-Rule" id="MF_00406"/>
    </source>
</evidence>
<proteinExistence type="inferred from homology"/>
<organism>
    <name type="scientific">Listeria welshimeri serovar 6b (strain ATCC 35897 / DSM 20650 / CCUG 15529 / CIP 8149 / NCTC 11857 / SLCC 5334 / V8)</name>
    <dbReference type="NCBI Taxonomy" id="386043"/>
    <lineage>
        <taxon>Bacteria</taxon>
        <taxon>Bacillati</taxon>
        <taxon>Bacillota</taxon>
        <taxon>Bacilli</taxon>
        <taxon>Bacillales</taxon>
        <taxon>Listeriaceae</taxon>
        <taxon>Listeria</taxon>
    </lineage>
</organism>
<gene>
    <name evidence="1" type="primary">fabZ</name>
    <name type="ordered locus">lwe2472</name>
</gene>
<name>FABZ_LISW6</name>
<keyword id="KW-0963">Cytoplasm</keyword>
<keyword id="KW-0441">Lipid A biosynthesis</keyword>
<keyword id="KW-0444">Lipid biosynthesis</keyword>
<keyword id="KW-0443">Lipid metabolism</keyword>
<keyword id="KW-0456">Lyase</keyword>
<feature type="chain" id="PRO_0000301902" description="3-hydroxyacyl-[acyl-carrier-protein] dehydratase FabZ">
    <location>
        <begin position="1"/>
        <end position="144"/>
    </location>
</feature>
<feature type="active site" evidence="1">
    <location>
        <position position="48"/>
    </location>
</feature>
<reference key="1">
    <citation type="journal article" date="2006" name="J. Bacteriol.">
        <title>Whole-genome sequence of Listeria welshimeri reveals common steps in genome reduction with Listeria innocua as compared to Listeria monocytogenes.</title>
        <authorList>
            <person name="Hain T."/>
            <person name="Steinweg C."/>
            <person name="Kuenne C.T."/>
            <person name="Billion A."/>
            <person name="Ghai R."/>
            <person name="Chatterjee S.S."/>
            <person name="Domann E."/>
            <person name="Kaerst U."/>
            <person name="Goesmann A."/>
            <person name="Bekel T."/>
            <person name="Bartels D."/>
            <person name="Kaiser O."/>
            <person name="Meyer F."/>
            <person name="Puehler A."/>
            <person name="Weisshaar B."/>
            <person name="Wehland J."/>
            <person name="Liang C."/>
            <person name="Dandekar T."/>
            <person name="Lampidis R."/>
            <person name="Kreft J."/>
            <person name="Goebel W."/>
            <person name="Chakraborty T."/>
        </authorList>
    </citation>
    <scope>NUCLEOTIDE SEQUENCE [LARGE SCALE GENOMIC DNA]</scope>
    <source>
        <strain>ATCC 35897 / DSM 20650 / CCUG 15529 / CIP 8149 / NCTC 11857 / SLCC 5334 / V8</strain>
    </source>
</reference>
<protein>
    <recommendedName>
        <fullName evidence="1">3-hydroxyacyl-[acyl-carrier-protein] dehydratase FabZ</fullName>
        <ecNumber evidence="1">4.2.1.59</ecNumber>
    </recommendedName>
    <alternativeName>
        <fullName evidence="1">(3R)-hydroxymyristoyl-[acyl-carrier-protein] dehydratase</fullName>
        <shortName evidence="1">(3R)-hydroxymyristoyl-ACP dehydrase</shortName>
    </alternativeName>
    <alternativeName>
        <fullName evidence="1">Beta-hydroxyacyl-ACP dehydratase</fullName>
    </alternativeName>
</protein>
<comment type="function">
    <text evidence="1">Involved in unsaturated fatty acids biosynthesis. Catalyzes the dehydration of short chain beta-hydroxyacyl-ACPs and long chain saturated and unsaturated beta-hydroxyacyl-ACPs.</text>
</comment>
<comment type="catalytic activity">
    <reaction evidence="1">
        <text>a (3R)-hydroxyacyl-[ACP] = a (2E)-enoyl-[ACP] + H2O</text>
        <dbReference type="Rhea" id="RHEA:13097"/>
        <dbReference type="Rhea" id="RHEA-COMP:9925"/>
        <dbReference type="Rhea" id="RHEA-COMP:9945"/>
        <dbReference type="ChEBI" id="CHEBI:15377"/>
        <dbReference type="ChEBI" id="CHEBI:78784"/>
        <dbReference type="ChEBI" id="CHEBI:78827"/>
        <dbReference type="EC" id="4.2.1.59"/>
    </reaction>
</comment>
<comment type="subcellular location">
    <subcellularLocation>
        <location evidence="1">Cytoplasm</location>
    </subcellularLocation>
</comment>
<comment type="similarity">
    <text evidence="1">Belongs to the thioester dehydratase family. FabZ subfamily.</text>
</comment>